<name>LIGB_SALAR</name>
<evidence type="ECO:0000255" key="1">
    <source>
        <dbReference type="HAMAP-Rule" id="MF_01587"/>
    </source>
</evidence>
<gene>
    <name evidence="1" type="primary">ligB</name>
    <name type="ordered locus">SARI_03901</name>
</gene>
<protein>
    <recommendedName>
        <fullName evidence="1">DNA ligase B</fullName>
        <ecNumber evidence="1">6.5.1.2</ecNumber>
    </recommendedName>
    <alternativeName>
        <fullName evidence="1">Polydeoxyribonucleotide synthase [NAD(+)] B</fullName>
    </alternativeName>
</protein>
<proteinExistence type="inferred from homology"/>
<reference key="1">
    <citation type="submission" date="2007-11" db="EMBL/GenBank/DDBJ databases">
        <authorList>
            <consortium name="The Salmonella enterica serovar Arizonae Genome Sequencing Project"/>
            <person name="McClelland M."/>
            <person name="Sanderson E.K."/>
            <person name="Porwollik S."/>
            <person name="Spieth J."/>
            <person name="Clifton W.S."/>
            <person name="Fulton R."/>
            <person name="Chunyan W."/>
            <person name="Wollam A."/>
            <person name="Shah N."/>
            <person name="Pepin K."/>
            <person name="Bhonagiri V."/>
            <person name="Nash W."/>
            <person name="Johnson M."/>
            <person name="Thiruvilangam P."/>
            <person name="Wilson R."/>
        </authorList>
    </citation>
    <scope>NUCLEOTIDE SEQUENCE [LARGE SCALE GENOMIC DNA]</scope>
    <source>
        <strain>ATCC BAA-731 / CDC346-86 / RSK2980</strain>
    </source>
</reference>
<organism>
    <name type="scientific">Salmonella arizonae (strain ATCC BAA-731 / CDC346-86 / RSK2980)</name>
    <dbReference type="NCBI Taxonomy" id="41514"/>
    <lineage>
        <taxon>Bacteria</taxon>
        <taxon>Pseudomonadati</taxon>
        <taxon>Pseudomonadota</taxon>
        <taxon>Gammaproteobacteria</taxon>
        <taxon>Enterobacterales</taxon>
        <taxon>Enterobacteriaceae</taxon>
        <taxon>Salmonella</taxon>
    </lineage>
</organism>
<accession>A9MKM6</accession>
<sequence>MGVWKSMVWGVLLWHSQSGAICPVWPSARTIEEIARLQQQLADWNDIYWKQGVSAVDDSVYDQLSAKLVQWQRCVGQDVSSTPVSPPLNGTTTHPVAHTGVRKLADRQAVAQWMRGHSEFWVQPKVDGVAVTLVYQNGKLTRAISRGNGLQGEDWTQKIRQISSIPQTTRGALANAVLQGEIFLQLKGHIQQRMGGMNARSKVAGMLMRQKNTSALNSLGIFIWAWPDGPANMTERLSQLAKAGFSLTQKYSQMVKNASEVERARRSWLTSALPFVTDGVVIRMAKEPSSQYWRPGQGDWLAAWKYPPVAQVAQVSAIQFSVGKSGKISVIASLVPVMLDDKRVKRVNIGSVKRWEAWDIAPGDQILVSLAGQGIPRLDEVVWRSRERSKPVPPGNHFNSLTCFYASATCQEQFISRLVWLGSRAALGLDGMGEASWRALHQTHRFEHIFSWLALTPAEIANTPGFAKGKSELIWRQFNLARRQPFSRWVMAMDIPLTQAALQASGDRSWEQLLMRTDQHWRQLPATGERRAGRVSDWRDNPRIKALSRWLAAQHIPGFGT</sequence>
<comment type="function">
    <text evidence="1">Catalyzes the formation of phosphodiester linkages between 5'-phosphoryl and 3'-hydroxyl groups in double-stranded DNA using NAD as a coenzyme and as the energy source for the reaction.</text>
</comment>
<comment type="catalytic activity">
    <reaction evidence="1">
        <text>NAD(+) + (deoxyribonucleotide)n-3'-hydroxyl + 5'-phospho-(deoxyribonucleotide)m = (deoxyribonucleotide)n+m + AMP + beta-nicotinamide D-nucleotide.</text>
        <dbReference type="EC" id="6.5.1.2"/>
    </reaction>
</comment>
<comment type="similarity">
    <text evidence="1">Belongs to the NAD-dependent DNA ligase family. LigB subfamily.</text>
</comment>
<feature type="chain" id="PRO_1000087958" description="DNA ligase B">
    <location>
        <begin position="1"/>
        <end position="561"/>
    </location>
</feature>
<feature type="active site" description="N6-AMP-lysine intermediate" evidence="1">
    <location>
        <position position="125"/>
    </location>
</feature>
<keyword id="KW-0227">DNA damage</keyword>
<keyword id="KW-0234">DNA repair</keyword>
<keyword id="KW-0235">DNA replication</keyword>
<keyword id="KW-0436">Ligase</keyword>
<keyword id="KW-0520">NAD</keyword>
<keyword id="KW-1185">Reference proteome</keyword>
<dbReference type="EC" id="6.5.1.2" evidence="1"/>
<dbReference type="EMBL" id="CP000880">
    <property type="protein sequence ID" value="ABX23695.1"/>
    <property type="molecule type" value="Genomic_DNA"/>
</dbReference>
<dbReference type="SMR" id="A9MKM6"/>
<dbReference type="STRING" id="41514.SARI_03901"/>
<dbReference type="KEGG" id="ses:SARI_03901"/>
<dbReference type="HOGENOM" id="CLU_489786_0_0_6"/>
<dbReference type="Proteomes" id="UP000002084">
    <property type="component" value="Chromosome"/>
</dbReference>
<dbReference type="GO" id="GO:0003911">
    <property type="term" value="F:DNA ligase (NAD+) activity"/>
    <property type="evidence" value="ECO:0007669"/>
    <property type="project" value="UniProtKB-UniRule"/>
</dbReference>
<dbReference type="GO" id="GO:0006281">
    <property type="term" value="P:DNA repair"/>
    <property type="evidence" value="ECO:0007669"/>
    <property type="project" value="UniProtKB-KW"/>
</dbReference>
<dbReference type="GO" id="GO:0006260">
    <property type="term" value="P:DNA replication"/>
    <property type="evidence" value="ECO:0007669"/>
    <property type="project" value="UniProtKB-KW"/>
</dbReference>
<dbReference type="FunFam" id="1.10.287.610:FF:000003">
    <property type="entry name" value="DNA ligase B"/>
    <property type="match status" value="1"/>
</dbReference>
<dbReference type="FunFam" id="2.40.50.140:FF:000139">
    <property type="entry name" value="DNA ligase B"/>
    <property type="match status" value="1"/>
</dbReference>
<dbReference type="FunFam" id="3.30.470.30:FF:000007">
    <property type="entry name" value="DNA ligase B"/>
    <property type="match status" value="1"/>
</dbReference>
<dbReference type="Gene3D" id="3.30.470.30">
    <property type="entry name" value="DNA ligase/mRNA capping enzyme"/>
    <property type="match status" value="1"/>
</dbReference>
<dbReference type="Gene3D" id="1.10.287.610">
    <property type="entry name" value="Helix hairpin bin"/>
    <property type="match status" value="1"/>
</dbReference>
<dbReference type="Gene3D" id="2.40.50.140">
    <property type="entry name" value="Nucleic acid-binding proteins"/>
    <property type="match status" value="1"/>
</dbReference>
<dbReference type="HAMAP" id="MF_01587">
    <property type="entry name" value="DNA_ligase_B"/>
    <property type="match status" value="1"/>
</dbReference>
<dbReference type="InterPro" id="IPR018239">
    <property type="entry name" value="DNA_ligase_AS"/>
</dbReference>
<dbReference type="InterPro" id="IPR020923">
    <property type="entry name" value="DNA_ligase_B"/>
</dbReference>
<dbReference type="InterPro" id="IPR013839">
    <property type="entry name" value="DNAligase_adenylation"/>
</dbReference>
<dbReference type="InterPro" id="IPR013840">
    <property type="entry name" value="DNAligase_N"/>
</dbReference>
<dbReference type="InterPro" id="IPR012340">
    <property type="entry name" value="NA-bd_OB-fold"/>
</dbReference>
<dbReference type="InterPro" id="IPR050326">
    <property type="entry name" value="NAD_dep_DNA_ligaseB"/>
</dbReference>
<dbReference type="InterPro" id="IPR004150">
    <property type="entry name" value="NAD_DNA_ligase_OB"/>
</dbReference>
<dbReference type="InterPro" id="IPR010994">
    <property type="entry name" value="RuvA_2-like"/>
</dbReference>
<dbReference type="NCBIfam" id="NF005987">
    <property type="entry name" value="PRK08097.1"/>
    <property type="match status" value="1"/>
</dbReference>
<dbReference type="PANTHER" id="PTHR47810">
    <property type="entry name" value="DNA LIGASE"/>
    <property type="match status" value="1"/>
</dbReference>
<dbReference type="PANTHER" id="PTHR47810:SF1">
    <property type="entry name" value="DNA LIGASE B"/>
    <property type="match status" value="1"/>
</dbReference>
<dbReference type="Pfam" id="PF01653">
    <property type="entry name" value="DNA_ligase_aden"/>
    <property type="match status" value="1"/>
</dbReference>
<dbReference type="Pfam" id="PF03120">
    <property type="entry name" value="DNA_ligase_OB"/>
    <property type="match status" value="1"/>
</dbReference>
<dbReference type="SMART" id="SM00532">
    <property type="entry name" value="LIGANc"/>
    <property type="match status" value="1"/>
</dbReference>
<dbReference type="SUPFAM" id="SSF56091">
    <property type="entry name" value="DNA ligase/mRNA capping enzyme, catalytic domain"/>
    <property type="match status" value="1"/>
</dbReference>
<dbReference type="SUPFAM" id="SSF50249">
    <property type="entry name" value="Nucleic acid-binding proteins"/>
    <property type="match status" value="1"/>
</dbReference>
<dbReference type="SUPFAM" id="SSF47781">
    <property type="entry name" value="RuvA domain 2-like"/>
    <property type="match status" value="1"/>
</dbReference>
<dbReference type="PROSITE" id="PS01055">
    <property type="entry name" value="DNA_LIGASE_N1"/>
    <property type="match status" value="1"/>
</dbReference>